<protein>
    <recommendedName>
        <fullName evidence="1">Elongation factor G 2</fullName>
        <shortName evidence="1">EF-G 2</shortName>
    </recommendedName>
</protein>
<proteinExistence type="inferred from homology"/>
<organism>
    <name type="scientific">Shewanella frigidimarina (strain NCIMB 400)</name>
    <dbReference type="NCBI Taxonomy" id="318167"/>
    <lineage>
        <taxon>Bacteria</taxon>
        <taxon>Pseudomonadati</taxon>
        <taxon>Pseudomonadota</taxon>
        <taxon>Gammaproteobacteria</taxon>
        <taxon>Alteromonadales</taxon>
        <taxon>Shewanellaceae</taxon>
        <taxon>Shewanella</taxon>
    </lineage>
</organism>
<comment type="function">
    <text evidence="1">Catalyzes the GTP-dependent ribosomal translocation step during translation elongation. During this step, the ribosome changes from the pre-translocational (PRE) to the post-translocational (POST) state as the newly formed A-site-bound peptidyl-tRNA and P-site-bound deacylated tRNA move to the P and E sites, respectively. Catalyzes the coordinated movement of the two tRNA molecules, the mRNA and conformational changes in the ribosome.</text>
</comment>
<comment type="subcellular location">
    <subcellularLocation>
        <location evidence="1">Cytoplasm</location>
    </subcellularLocation>
</comment>
<comment type="similarity">
    <text evidence="1">Belongs to the TRAFAC class translation factor GTPase superfamily. Classic translation factor GTPase family. EF-G/EF-2 subfamily.</text>
</comment>
<feature type="chain" id="PRO_0000263506" description="Elongation factor G 2">
    <location>
        <begin position="1"/>
        <end position="697"/>
    </location>
</feature>
<feature type="domain" description="tr-type G">
    <location>
        <begin position="5"/>
        <end position="280"/>
    </location>
</feature>
<feature type="binding site" evidence="1">
    <location>
        <begin position="14"/>
        <end position="21"/>
    </location>
    <ligand>
        <name>GTP</name>
        <dbReference type="ChEBI" id="CHEBI:37565"/>
    </ligand>
</feature>
<feature type="binding site" evidence="1">
    <location>
        <begin position="78"/>
        <end position="82"/>
    </location>
    <ligand>
        <name>GTP</name>
        <dbReference type="ChEBI" id="CHEBI:37565"/>
    </ligand>
</feature>
<feature type="binding site" evidence="1">
    <location>
        <begin position="132"/>
        <end position="135"/>
    </location>
    <ligand>
        <name>GTP</name>
        <dbReference type="ChEBI" id="CHEBI:37565"/>
    </ligand>
</feature>
<name>EFG2_SHEFN</name>
<accession>Q088A4</accession>
<gene>
    <name evidence="1" type="primary">fusA2</name>
    <name type="ordered locus">Sfri_0550</name>
</gene>
<reference key="1">
    <citation type="submission" date="2006-08" db="EMBL/GenBank/DDBJ databases">
        <title>Complete sequence of Shewanella frigidimarina NCIMB 400.</title>
        <authorList>
            <consortium name="US DOE Joint Genome Institute"/>
            <person name="Copeland A."/>
            <person name="Lucas S."/>
            <person name="Lapidus A."/>
            <person name="Barry K."/>
            <person name="Detter J.C."/>
            <person name="Glavina del Rio T."/>
            <person name="Hammon N."/>
            <person name="Israni S."/>
            <person name="Dalin E."/>
            <person name="Tice H."/>
            <person name="Pitluck S."/>
            <person name="Fredrickson J.K."/>
            <person name="Kolker E."/>
            <person name="McCuel L.A."/>
            <person name="DiChristina T."/>
            <person name="Nealson K.H."/>
            <person name="Newman D."/>
            <person name="Tiedje J.M."/>
            <person name="Zhou J."/>
            <person name="Romine M.F."/>
            <person name="Culley D.E."/>
            <person name="Serres M."/>
            <person name="Chertkov O."/>
            <person name="Brettin T."/>
            <person name="Bruce D."/>
            <person name="Han C."/>
            <person name="Tapia R."/>
            <person name="Gilna P."/>
            <person name="Schmutz J."/>
            <person name="Larimer F."/>
            <person name="Land M."/>
            <person name="Hauser L."/>
            <person name="Kyrpides N."/>
            <person name="Mikhailova N."/>
            <person name="Richardson P."/>
        </authorList>
    </citation>
    <scope>NUCLEOTIDE SEQUENCE [LARGE SCALE GENOMIC DNA]</scope>
    <source>
        <strain>NCIMB 400</strain>
    </source>
</reference>
<sequence>MTELSKYRNIGIFAHVDAGKTTTTERILKLTGKIHKIGEVHDGESTTDFMEQEAERGITIQSAAVSCFWKDHRFNVIDTPGHVDFTVEVYRSLKVLDGGIGVFCGSGGVEPQSETNWRYANDSEVARIIFVNKLDRMGADFLRVVKQTKDVLAANPLVMVLPIGIEDEFCGVVDLLTREAHIWDDSGLPENFEIKPVPADMVDIVEEYREMLIETALEQDDALLEAYMEGVQPSIEDVKRCIRAGTRTMAVFPTYCGSAFKNKGMQLLLDAVVDYLPDPVEVDPQPLTDEEGNENGEFAIVDVDAPFKALAFKIMDDRFGALTFVRIYSGRLKKGDTILNSFTGKTERIGRMVEMQANERNELESAQAGDIIAIVGMKNVQTGHTLCDPKHPCTLEAMVFPEPVISISVTPKDKGGSEKMGIAIGKMIAEDPSFRVETDIDSGETILKGMGELHLDIKVDILKRTYGVDLIVGEPQVAYRETITKEIEDSYTHKKQSGGSGQFGKIDYTIRPGEQNTGFTFTSKVVGGNVPKEFWPAVEKGFKSMMNTGTIAGFPVLDVELVLQDGAFHAVDSSAIAFEIAAKGAFRQSMPKAGAQLLEPIMNVDVFSPDDNVGDVIGDLNRRRGMIKDQNAGVTGVRIKADVPLSEMFGYIGSLRTMTSGRGQFSMEFAHYSPCPNSVSEKVVAQVKERKAAEAKK</sequence>
<keyword id="KW-0963">Cytoplasm</keyword>
<keyword id="KW-0251">Elongation factor</keyword>
<keyword id="KW-0342">GTP-binding</keyword>
<keyword id="KW-0547">Nucleotide-binding</keyword>
<keyword id="KW-0648">Protein biosynthesis</keyword>
<keyword id="KW-1185">Reference proteome</keyword>
<evidence type="ECO:0000255" key="1">
    <source>
        <dbReference type="HAMAP-Rule" id="MF_00054"/>
    </source>
</evidence>
<dbReference type="EMBL" id="CP000447">
    <property type="protein sequence ID" value="ABI70411.1"/>
    <property type="molecule type" value="Genomic_DNA"/>
</dbReference>
<dbReference type="SMR" id="Q088A4"/>
<dbReference type="STRING" id="318167.Sfri_0550"/>
<dbReference type="KEGG" id="sfr:Sfri_0550"/>
<dbReference type="eggNOG" id="COG0480">
    <property type="taxonomic scope" value="Bacteria"/>
</dbReference>
<dbReference type="HOGENOM" id="CLU_002794_4_1_6"/>
<dbReference type="OrthoDB" id="9804431at2"/>
<dbReference type="Proteomes" id="UP000000684">
    <property type="component" value="Chromosome"/>
</dbReference>
<dbReference type="GO" id="GO:0005737">
    <property type="term" value="C:cytoplasm"/>
    <property type="evidence" value="ECO:0007669"/>
    <property type="project" value="UniProtKB-SubCell"/>
</dbReference>
<dbReference type="GO" id="GO:0005525">
    <property type="term" value="F:GTP binding"/>
    <property type="evidence" value="ECO:0007669"/>
    <property type="project" value="UniProtKB-UniRule"/>
</dbReference>
<dbReference type="GO" id="GO:0003924">
    <property type="term" value="F:GTPase activity"/>
    <property type="evidence" value="ECO:0007669"/>
    <property type="project" value="InterPro"/>
</dbReference>
<dbReference type="GO" id="GO:0097216">
    <property type="term" value="F:guanosine tetraphosphate binding"/>
    <property type="evidence" value="ECO:0007669"/>
    <property type="project" value="UniProtKB-ARBA"/>
</dbReference>
<dbReference type="GO" id="GO:0003746">
    <property type="term" value="F:translation elongation factor activity"/>
    <property type="evidence" value="ECO:0007669"/>
    <property type="project" value="UniProtKB-UniRule"/>
</dbReference>
<dbReference type="GO" id="GO:0032790">
    <property type="term" value="P:ribosome disassembly"/>
    <property type="evidence" value="ECO:0007669"/>
    <property type="project" value="TreeGrafter"/>
</dbReference>
<dbReference type="CDD" id="cd01886">
    <property type="entry name" value="EF-G"/>
    <property type="match status" value="1"/>
</dbReference>
<dbReference type="CDD" id="cd16262">
    <property type="entry name" value="EFG_III"/>
    <property type="match status" value="1"/>
</dbReference>
<dbReference type="CDD" id="cd01434">
    <property type="entry name" value="EFG_mtEFG1_IV"/>
    <property type="match status" value="1"/>
</dbReference>
<dbReference type="CDD" id="cd03713">
    <property type="entry name" value="EFG_mtEFG_C"/>
    <property type="match status" value="1"/>
</dbReference>
<dbReference type="CDD" id="cd04088">
    <property type="entry name" value="EFG_mtEFG_II"/>
    <property type="match status" value="1"/>
</dbReference>
<dbReference type="FunFam" id="2.40.30.10:FF:000006">
    <property type="entry name" value="Elongation factor G"/>
    <property type="match status" value="1"/>
</dbReference>
<dbReference type="FunFam" id="3.30.230.10:FF:000003">
    <property type="entry name" value="Elongation factor G"/>
    <property type="match status" value="1"/>
</dbReference>
<dbReference type="FunFam" id="3.30.70.240:FF:000001">
    <property type="entry name" value="Elongation factor G"/>
    <property type="match status" value="1"/>
</dbReference>
<dbReference type="FunFam" id="3.30.70.870:FF:000006">
    <property type="entry name" value="Elongation factor G"/>
    <property type="match status" value="1"/>
</dbReference>
<dbReference type="FunFam" id="3.40.50.300:FF:000029">
    <property type="entry name" value="Elongation factor G"/>
    <property type="match status" value="1"/>
</dbReference>
<dbReference type="Gene3D" id="3.30.230.10">
    <property type="match status" value="1"/>
</dbReference>
<dbReference type="Gene3D" id="3.30.70.240">
    <property type="match status" value="1"/>
</dbReference>
<dbReference type="Gene3D" id="3.30.70.870">
    <property type="entry name" value="Elongation Factor G (Translational Gtpase), domain 3"/>
    <property type="match status" value="1"/>
</dbReference>
<dbReference type="Gene3D" id="3.40.50.300">
    <property type="entry name" value="P-loop containing nucleotide triphosphate hydrolases"/>
    <property type="match status" value="1"/>
</dbReference>
<dbReference type="Gene3D" id="2.40.30.10">
    <property type="entry name" value="Translation factors"/>
    <property type="match status" value="1"/>
</dbReference>
<dbReference type="HAMAP" id="MF_00054_B">
    <property type="entry name" value="EF_G_EF_2_B"/>
    <property type="match status" value="1"/>
</dbReference>
<dbReference type="InterPro" id="IPR041095">
    <property type="entry name" value="EFG_II"/>
</dbReference>
<dbReference type="InterPro" id="IPR009022">
    <property type="entry name" value="EFG_III"/>
</dbReference>
<dbReference type="InterPro" id="IPR035647">
    <property type="entry name" value="EFG_III/V"/>
</dbReference>
<dbReference type="InterPro" id="IPR047872">
    <property type="entry name" value="EFG_IV"/>
</dbReference>
<dbReference type="InterPro" id="IPR035649">
    <property type="entry name" value="EFG_V"/>
</dbReference>
<dbReference type="InterPro" id="IPR000640">
    <property type="entry name" value="EFG_V-like"/>
</dbReference>
<dbReference type="InterPro" id="IPR004161">
    <property type="entry name" value="EFTu-like_2"/>
</dbReference>
<dbReference type="InterPro" id="IPR031157">
    <property type="entry name" value="G_TR_CS"/>
</dbReference>
<dbReference type="InterPro" id="IPR027417">
    <property type="entry name" value="P-loop_NTPase"/>
</dbReference>
<dbReference type="InterPro" id="IPR020568">
    <property type="entry name" value="Ribosomal_Su5_D2-typ_SF"/>
</dbReference>
<dbReference type="InterPro" id="IPR014721">
    <property type="entry name" value="Ribsml_uS5_D2-typ_fold_subgr"/>
</dbReference>
<dbReference type="InterPro" id="IPR005225">
    <property type="entry name" value="Small_GTP-bd"/>
</dbReference>
<dbReference type="InterPro" id="IPR000795">
    <property type="entry name" value="T_Tr_GTP-bd_dom"/>
</dbReference>
<dbReference type="InterPro" id="IPR009000">
    <property type="entry name" value="Transl_B-barrel_sf"/>
</dbReference>
<dbReference type="InterPro" id="IPR004540">
    <property type="entry name" value="Transl_elong_EFG/EF2"/>
</dbReference>
<dbReference type="InterPro" id="IPR005517">
    <property type="entry name" value="Transl_elong_EFG/EF2_IV"/>
</dbReference>
<dbReference type="NCBIfam" id="TIGR00484">
    <property type="entry name" value="EF-G"/>
    <property type="match status" value="1"/>
</dbReference>
<dbReference type="NCBIfam" id="NF009381">
    <property type="entry name" value="PRK12740.1-5"/>
    <property type="match status" value="1"/>
</dbReference>
<dbReference type="NCBIfam" id="TIGR00231">
    <property type="entry name" value="small_GTP"/>
    <property type="match status" value="1"/>
</dbReference>
<dbReference type="PANTHER" id="PTHR43261:SF5">
    <property type="entry name" value="ELONGATION FACTOR G 1"/>
    <property type="match status" value="1"/>
</dbReference>
<dbReference type="PANTHER" id="PTHR43261">
    <property type="entry name" value="TRANSLATION ELONGATION FACTOR G-RELATED"/>
    <property type="match status" value="1"/>
</dbReference>
<dbReference type="Pfam" id="PF00679">
    <property type="entry name" value="EFG_C"/>
    <property type="match status" value="1"/>
</dbReference>
<dbReference type="Pfam" id="PF14492">
    <property type="entry name" value="EFG_III"/>
    <property type="match status" value="1"/>
</dbReference>
<dbReference type="Pfam" id="PF03764">
    <property type="entry name" value="EFG_IV"/>
    <property type="match status" value="1"/>
</dbReference>
<dbReference type="Pfam" id="PF00009">
    <property type="entry name" value="GTP_EFTU"/>
    <property type="match status" value="1"/>
</dbReference>
<dbReference type="Pfam" id="PF03144">
    <property type="entry name" value="GTP_EFTU_D2"/>
    <property type="match status" value="1"/>
</dbReference>
<dbReference type="PRINTS" id="PR00315">
    <property type="entry name" value="ELONGATNFCT"/>
</dbReference>
<dbReference type="SMART" id="SM00838">
    <property type="entry name" value="EFG_C"/>
    <property type="match status" value="1"/>
</dbReference>
<dbReference type="SMART" id="SM00889">
    <property type="entry name" value="EFG_IV"/>
    <property type="match status" value="1"/>
</dbReference>
<dbReference type="SUPFAM" id="SSF54980">
    <property type="entry name" value="EF-G C-terminal domain-like"/>
    <property type="match status" value="2"/>
</dbReference>
<dbReference type="SUPFAM" id="SSF52540">
    <property type="entry name" value="P-loop containing nucleoside triphosphate hydrolases"/>
    <property type="match status" value="1"/>
</dbReference>
<dbReference type="SUPFAM" id="SSF54211">
    <property type="entry name" value="Ribosomal protein S5 domain 2-like"/>
    <property type="match status" value="1"/>
</dbReference>
<dbReference type="SUPFAM" id="SSF50447">
    <property type="entry name" value="Translation proteins"/>
    <property type="match status" value="1"/>
</dbReference>
<dbReference type="PROSITE" id="PS00301">
    <property type="entry name" value="G_TR_1"/>
    <property type="match status" value="1"/>
</dbReference>
<dbReference type="PROSITE" id="PS51722">
    <property type="entry name" value="G_TR_2"/>
    <property type="match status" value="1"/>
</dbReference>